<evidence type="ECO:0000255" key="1">
    <source>
        <dbReference type="HAMAP-Rule" id="MF_01396"/>
    </source>
</evidence>
<dbReference type="EMBL" id="CP000027">
    <property type="protein sequence ID" value="AAW40136.1"/>
    <property type="molecule type" value="Genomic_DNA"/>
</dbReference>
<dbReference type="RefSeq" id="WP_010936335.1">
    <property type="nucleotide sequence ID" value="NC_002936.3"/>
</dbReference>
<dbReference type="SMR" id="Q3Z8Z7"/>
<dbReference type="FunCoup" id="Q3Z8Z7">
    <property type="interactions" value="294"/>
</dbReference>
<dbReference type="STRING" id="243164.DET0559"/>
<dbReference type="GeneID" id="3230099"/>
<dbReference type="KEGG" id="det:DET0559"/>
<dbReference type="eggNOG" id="COG0636">
    <property type="taxonomic scope" value="Bacteria"/>
</dbReference>
<dbReference type="HOGENOM" id="CLU_148047_5_0_0"/>
<dbReference type="InParanoid" id="Q3Z8Z7"/>
<dbReference type="Proteomes" id="UP000008289">
    <property type="component" value="Chromosome"/>
</dbReference>
<dbReference type="GO" id="GO:0005886">
    <property type="term" value="C:plasma membrane"/>
    <property type="evidence" value="ECO:0007669"/>
    <property type="project" value="UniProtKB-SubCell"/>
</dbReference>
<dbReference type="GO" id="GO:0045259">
    <property type="term" value="C:proton-transporting ATP synthase complex"/>
    <property type="evidence" value="ECO:0007669"/>
    <property type="project" value="UniProtKB-KW"/>
</dbReference>
<dbReference type="GO" id="GO:0033177">
    <property type="term" value="C:proton-transporting two-sector ATPase complex, proton-transporting domain"/>
    <property type="evidence" value="ECO:0007669"/>
    <property type="project" value="InterPro"/>
</dbReference>
<dbReference type="GO" id="GO:0008289">
    <property type="term" value="F:lipid binding"/>
    <property type="evidence" value="ECO:0007669"/>
    <property type="project" value="UniProtKB-KW"/>
</dbReference>
<dbReference type="GO" id="GO:0046933">
    <property type="term" value="F:proton-transporting ATP synthase activity, rotational mechanism"/>
    <property type="evidence" value="ECO:0007669"/>
    <property type="project" value="UniProtKB-UniRule"/>
</dbReference>
<dbReference type="CDD" id="cd18121">
    <property type="entry name" value="ATP-synt_Fo_c"/>
    <property type="match status" value="1"/>
</dbReference>
<dbReference type="FunFam" id="1.20.20.10:FF:000002">
    <property type="entry name" value="ATP synthase subunit c"/>
    <property type="match status" value="1"/>
</dbReference>
<dbReference type="Gene3D" id="1.20.20.10">
    <property type="entry name" value="F1F0 ATP synthase subunit C"/>
    <property type="match status" value="1"/>
</dbReference>
<dbReference type="HAMAP" id="MF_01396">
    <property type="entry name" value="ATP_synth_c_bact"/>
    <property type="match status" value="1"/>
</dbReference>
<dbReference type="InterPro" id="IPR005953">
    <property type="entry name" value="ATP_synth_csu_bac/chlpt"/>
</dbReference>
<dbReference type="InterPro" id="IPR000454">
    <property type="entry name" value="ATP_synth_F0_csu"/>
</dbReference>
<dbReference type="InterPro" id="IPR020537">
    <property type="entry name" value="ATP_synth_F0_csu_DDCD_BS"/>
</dbReference>
<dbReference type="InterPro" id="IPR038662">
    <property type="entry name" value="ATP_synth_F0_csu_sf"/>
</dbReference>
<dbReference type="InterPro" id="IPR002379">
    <property type="entry name" value="ATPase_proteolipid_c-like_dom"/>
</dbReference>
<dbReference type="InterPro" id="IPR035921">
    <property type="entry name" value="F/V-ATP_Csub_sf"/>
</dbReference>
<dbReference type="NCBIfam" id="TIGR01260">
    <property type="entry name" value="ATP_synt_c"/>
    <property type="match status" value="1"/>
</dbReference>
<dbReference type="Pfam" id="PF00137">
    <property type="entry name" value="ATP-synt_C"/>
    <property type="match status" value="1"/>
</dbReference>
<dbReference type="PRINTS" id="PR00124">
    <property type="entry name" value="ATPASEC"/>
</dbReference>
<dbReference type="SUPFAM" id="SSF81333">
    <property type="entry name" value="F1F0 ATP synthase subunit C"/>
    <property type="match status" value="1"/>
</dbReference>
<dbReference type="PROSITE" id="PS00605">
    <property type="entry name" value="ATPASE_C"/>
    <property type="match status" value="1"/>
</dbReference>
<name>ATPL_DEHM1</name>
<protein>
    <recommendedName>
        <fullName evidence="1">ATP synthase subunit c</fullName>
    </recommendedName>
    <alternativeName>
        <fullName evidence="1">ATP synthase F(0) sector subunit c</fullName>
    </alternativeName>
    <alternativeName>
        <fullName evidence="1">F-type ATPase subunit c</fullName>
        <shortName evidence="1">F-ATPase subunit c</shortName>
    </alternativeName>
    <alternativeName>
        <fullName evidence="1">Lipid-binding protein</fullName>
    </alternativeName>
</protein>
<keyword id="KW-0066">ATP synthesis</keyword>
<keyword id="KW-1003">Cell membrane</keyword>
<keyword id="KW-0138">CF(0)</keyword>
<keyword id="KW-0375">Hydrogen ion transport</keyword>
<keyword id="KW-0406">Ion transport</keyword>
<keyword id="KW-0446">Lipid-binding</keyword>
<keyword id="KW-0472">Membrane</keyword>
<keyword id="KW-0812">Transmembrane</keyword>
<keyword id="KW-1133">Transmembrane helix</keyword>
<keyword id="KW-0813">Transport</keyword>
<proteinExistence type="inferred from homology"/>
<comment type="function">
    <text evidence="1">F(1)F(0) ATP synthase produces ATP from ADP in the presence of a proton or sodium gradient. F-type ATPases consist of two structural domains, F(1) containing the extramembraneous catalytic core and F(0) containing the membrane proton channel, linked together by a central stalk and a peripheral stalk. During catalysis, ATP synthesis in the catalytic domain of F(1) is coupled via a rotary mechanism of the central stalk subunits to proton translocation.</text>
</comment>
<comment type="function">
    <text evidence="1">Key component of the F(0) channel; it plays a direct role in translocation across the membrane. A homomeric c-ring of between 10-14 subunits forms the central stalk rotor element with the F(1) delta and epsilon subunits.</text>
</comment>
<comment type="subunit">
    <text evidence="1">F-type ATPases have 2 components, F(1) - the catalytic core - and F(0) - the membrane proton channel. F(1) has five subunits: alpha(3), beta(3), gamma(1), delta(1), epsilon(1). F(0) has three main subunits: a(1), b(2) and c(10-14). The alpha and beta chains form an alternating ring which encloses part of the gamma chain. F(1) is attached to F(0) by a central stalk formed by the gamma and epsilon chains, while a peripheral stalk is formed by the delta and b chains.</text>
</comment>
<comment type="subcellular location">
    <subcellularLocation>
        <location evidence="1">Cell membrane</location>
        <topology evidence="1">Multi-pass membrane protein</topology>
    </subcellularLocation>
</comment>
<comment type="similarity">
    <text evidence="1">Belongs to the ATPase C chain family.</text>
</comment>
<feature type="chain" id="PRO_0000365877" description="ATP synthase subunit c">
    <location>
        <begin position="1"/>
        <end position="76"/>
    </location>
</feature>
<feature type="transmembrane region" description="Helical" evidence="1">
    <location>
        <begin position="8"/>
        <end position="28"/>
    </location>
</feature>
<feature type="transmembrane region" description="Helical" evidence="1">
    <location>
        <begin position="55"/>
        <end position="75"/>
    </location>
</feature>
<feature type="site" description="Reversibly protonated during proton transport" evidence="1">
    <location>
        <position position="59"/>
    </location>
</feature>
<organism>
    <name type="scientific">Dehalococcoides mccartyi (strain ATCC BAA-2266 / KCTC 15142 / 195)</name>
    <name type="common">Dehalococcoides ethenogenes (strain 195)</name>
    <dbReference type="NCBI Taxonomy" id="243164"/>
    <lineage>
        <taxon>Bacteria</taxon>
        <taxon>Bacillati</taxon>
        <taxon>Chloroflexota</taxon>
        <taxon>Dehalococcoidia</taxon>
        <taxon>Dehalococcoidales</taxon>
        <taxon>Dehalococcoidaceae</taxon>
        <taxon>Dehalococcoides</taxon>
    </lineage>
</organism>
<sequence>MEADVIKLLAAGLAMGLGAIGPGIGVGILGFGALQAIGRNPEAKGSIFTNMILLVAFAESIAIFALVISIVLIFVA</sequence>
<gene>
    <name evidence="1" type="primary">atpE</name>
    <name type="ordered locus">DET0559</name>
</gene>
<accession>Q3Z8Z7</accession>
<reference key="1">
    <citation type="journal article" date="2005" name="Science">
        <title>Genome sequence of the PCE-dechlorinating bacterium Dehalococcoides ethenogenes.</title>
        <authorList>
            <person name="Seshadri R."/>
            <person name="Adrian L."/>
            <person name="Fouts D.E."/>
            <person name="Eisen J.A."/>
            <person name="Phillippy A.M."/>
            <person name="Methe B.A."/>
            <person name="Ward N.L."/>
            <person name="Nelson W.C."/>
            <person name="DeBoy R.T."/>
            <person name="Khouri H.M."/>
            <person name="Kolonay J.F."/>
            <person name="Dodson R.J."/>
            <person name="Daugherty S.C."/>
            <person name="Brinkac L.M."/>
            <person name="Sullivan S.A."/>
            <person name="Madupu R."/>
            <person name="Nelson K.E."/>
            <person name="Kang K.H."/>
            <person name="Impraim M."/>
            <person name="Tran K."/>
            <person name="Robinson J.M."/>
            <person name="Forberger H.A."/>
            <person name="Fraser C.M."/>
            <person name="Zinder S.H."/>
            <person name="Heidelberg J.F."/>
        </authorList>
    </citation>
    <scope>NUCLEOTIDE SEQUENCE [LARGE SCALE GENOMIC DNA]</scope>
    <source>
        <strain>ATCC BAA-2266 / KCTC 15142 / 195</strain>
    </source>
</reference>